<feature type="chain" id="PRO_1000149557" description="Ribosome rescue factor SmrB">
    <location>
        <begin position="1"/>
        <end position="183"/>
    </location>
</feature>
<feature type="domain" description="Smr" evidence="1">
    <location>
        <begin position="98"/>
        <end position="173"/>
    </location>
</feature>
<protein>
    <recommendedName>
        <fullName evidence="1">Ribosome rescue factor SmrB</fullName>
        <ecNumber evidence="1">3.1.-.-</ecNumber>
    </recommendedName>
</protein>
<accession>C0PZX8</accession>
<comment type="function">
    <text evidence="1">Acts as a ribosome collision sensor. Detects stalled/collided disomes (pairs of ribosomes where the leading ribosome is stalled and a second ribosome has collided with it) and endonucleolytically cleaves mRNA at the 5' boundary of the stalled ribosome. Stalled/collided disomes form a new interface (primarily via the 30S subunits) that binds SmrB. Cleaved mRNA becomes available for tmRNA ligation, leading to ribosomal subunit dissociation and rescue of stalled ribosomes.</text>
</comment>
<comment type="subunit">
    <text evidence="1">Associates with collided ribosomes, but not with correctly translating polysomes.</text>
</comment>
<comment type="similarity">
    <text evidence="1">Belongs to the SmrB family.</text>
</comment>
<proteinExistence type="inferred from homology"/>
<sequence>MKKKTSLSEEDQALFRQLMVGTRKIKQDTIVHRPLRKKITEVPTRRLIQEQADASHYFSDEFQPLLNTEGPVKYVREDVSHFELKKMRRGDYSPELFLDLHGLTQLQAKQELGALIAACRREHIFCACVMHGHGKHILKQQTPLWLAQHPHVMAFHQAPKEYGGDAALLVLIEVEEWQPPELP</sequence>
<evidence type="ECO:0000255" key="1">
    <source>
        <dbReference type="HAMAP-Rule" id="MF_01042"/>
    </source>
</evidence>
<organism>
    <name type="scientific">Salmonella paratyphi C (strain RKS4594)</name>
    <dbReference type="NCBI Taxonomy" id="476213"/>
    <lineage>
        <taxon>Bacteria</taxon>
        <taxon>Pseudomonadati</taxon>
        <taxon>Pseudomonadota</taxon>
        <taxon>Gammaproteobacteria</taxon>
        <taxon>Enterobacterales</taxon>
        <taxon>Enterobacteriaceae</taxon>
        <taxon>Salmonella</taxon>
    </lineage>
</organism>
<dbReference type="EC" id="3.1.-.-" evidence="1"/>
<dbReference type="EMBL" id="CP000857">
    <property type="protein sequence ID" value="ACN45482.1"/>
    <property type="molecule type" value="Genomic_DNA"/>
</dbReference>
<dbReference type="RefSeq" id="WP_000730794.1">
    <property type="nucleotide sequence ID" value="NC_012125.1"/>
</dbReference>
<dbReference type="SMR" id="C0PZX8"/>
<dbReference type="KEGG" id="sei:SPC_1319"/>
<dbReference type="HOGENOM" id="CLU_055978_4_0_6"/>
<dbReference type="Proteomes" id="UP000001599">
    <property type="component" value="Chromosome"/>
</dbReference>
<dbReference type="GO" id="GO:0004521">
    <property type="term" value="F:RNA endonuclease activity"/>
    <property type="evidence" value="ECO:0007669"/>
    <property type="project" value="UniProtKB-UniRule"/>
</dbReference>
<dbReference type="GO" id="GO:0019843">
    <property type="term" value="F:rRNA binding"/>
    <property type="evidence" value="ECO:0007669"/>
    <property type="project" value="UniProtKB-UniRule"/>
</dbReference>
<dbReference type="GO" id="GO:0072344">
    <property type="term" value="P:rescue of stalled ribosome"/>
    <property type="evidence" value="ECO:0007669"/>
    <property type="project" value="UniProtKB-UniRule"/>
</dbReference>
<dbReference type="Gene3D" id="3.30.1370.110">
    <property type="match status" value="1"/>
</dbReference>
<dbReference type="HAMAP" id="MF_01042">
    <property type="entry name" value="SmrB"/>
    <property type="match status" value="1"/>
</dbReference>
<dbReference type="InterPro" id="IPR002625">
    <property type="entry name" value="Smr_dom"/>
</dbReference>
<dbReference type="InterPro" id="IPR036063">
    <property type="entry name" value="Smr_dom_sf"/>
</dbReference>
<dbReference type="InterPro" id="IPR022990">
    <property type="entry name" value="SmrB-like"/>
</dbReference>
<dbReference type="NCBIfam" id="NF003432">
    <property type="entry name" value="PRK04946.1"/>
    <property type="match status" value="1"/>
</dbReference>
<dbReference type="PANTHER" id="PTHR35562">
    <property type="entry name" value="DNA ENDONUCLEASE SMRA-RELATED"/>
    <property type="match status" value="1"/>
</dbReference>
<dbReference type="PANTHER" id="PTHR35562:SF1">
    <property type="entry name" value="UPF0115 PROTEIN YFCN"/>
    <property type="match status" value="1"/>
</dbReference>
<dbReference type="Pfam" id="PF01713">
    <property type="entry name" value="Smr"/>
    <property type="match status" value="1"/>
</dbReference>
<dbReference type="SMART" id="SM00463">
    <property type="entry name" value="SMR"/>
    <property type="match status" value="1"/>
</dbReference>
<dbReference type="SUPFAM" id="SSF160443">
    <property type="entry name" value="SMR domain-like"/>
    <property type="match status" value="1"/>
</dbReference>
<dbReference type="PROSITE" id="PS50828">
    <property type="entry name" value="SMR"/>
    <property type="match status" value="1"/>
</dbReference>
<gene>
    <name evidence="1" type="primary">smrB</name>
    <name type="ordered locus">SPC_1319</name>
</gene>
<keyword id="KW-0255">Endonuclease</keyword>
<keyword id="KW-0378">Hydrolase</keyword>
<keyword id="KW-0540">Nuclease</keyword>
<keyword id="KW-0694">RNA-binding</keyword>
<keyword id="KW-0699">rRNA-binding</keyword>
<name>SMRB_SALPC</name>
<reference key="1">
    <citation type="journal article" date="2009" name="PLoS ONE">
        <title>Salmonella paratyphi C: genetic divergence from Salmonella choleraesuis and pathogenic convergence with Salmonella typhi.</title>
        <authorList>
            <person name="Liu W.-Q."/>
            <person name="Feng Y."/>
            <person name="Wang Y."/>
            <person name="Zou Q.-H."/>
            <person name="Chen F."/>
            <person name="Guo J.-T."/>
            <person name="Peng Y.-H."/>
            <person name="Jin Y."/>
            <person name="Li Y.-G."/>
            <person name="Hu S.-N."/>
            <person name="Johnston R.N."/>
            <person name="Liu G.-R."/>
            <person name="Liu S.-L."/>
        </authorList>
    </citation>
    <scope>NUCLEOTIDE SEQUENCE [LARGE SCALE GENOMIC DNA]</scope>
    <source>
        <strain>RKS4594</strain>
    </source>
</reference>